<proteinExistence type="inferred from homology"/>
<feature type="chain" id="PRO_0000230378" description="Small ribosomal subunit protein uS5">
    <location>
        <begin position="1"/>
        <end position="169"/>
    </location>
</feature>
<feature type="domain" description="S5 DRBM" evidence="1">
    <location>
        <begin position="13"/>
        <end position="76"/>
    </location>
</feature>
<dbReference type="EMBL" id="CP000109">
    <property type="protein sequence ID" value="ABB40908.1"/>
    <property type="molecule type" value="Genomic_DNA"/>
</dbReference>
<dbReference type="SMR" id="Q31IW5"/>
<dbReference type="STRING" id="317025.Tcr_0312"/>
<dbReference type="KEGG" id="tcx:Tcr_0312"/>
<dbReference type="eggNOG" id="COG0098">
    <property type="taxonomic scope" value="Bacteria"/>
</dbReference>
<dbReference type="HOGENOM" id="CLU_065898_2_2_6"/>
<dbReference type="OrthoDB" id="9809045at2"/>
<dbReference type="GO" id="GO:0015935">
    <property type="term" value="C:small ribosomal subunit"/>
    <property type="evidence" value="ECO:0007669"/>
    <property type="project" value="InterPro"/>
</dbReference>
<dbReference type="GO" id="GO:0019843">
    <property type="term" value="F:rRNA binding"/>
    <property type="evidence" value="ECO:0007669"/>
    <property type="project" value="UniProtKB-UniRule"/>
</dbReference>
<dbReference type="GO" id="GO:0003735">
    <property type="term" value="F:structural constituent of ribosome"/>
    <property type="evidence" value="ECO:0007669"/>
    <property type="project" value="InterPro"/>
</dbReference>
<dbReference type="GO" id="GO:0006412">
    <property type="term" value="P:translation"/>
    <property type="evidence" value="ECO:0007669"/>
    <property type="project" value="UniProtKB-UniRule"/>
</dbReference>
<dbReference type="FunFam" id="3.30.160.20:FF:000001">
    <property type="entry name" value="30S ribosomal protein S5"/>
    <property type="match status" value="1"/>
</dbReference>
<dbReference type="FunFam" id="3.30.230.10:FF:000002">
    <property type="entry name" value="30S ribosomal protein S5"/>
    <property type="match status" value="1"/>
</dbReference>
<dbReference type="Gene3D" id="3.30.160.20">
    <property type="match status" value="1"/>
</dbReference>
<dbReference type="Gene3D" id="3.30.230.10">
    <property type="match status" value="1"/>
</dbReference>
<dbReference type="HAMAP" id="MF_01307_B">
    <property type="entry name" value="Ribosomal_uS5_B"/>
    <property type="match status" value="1"/>
</dbReference>
<dbReference type="InterPro" id="IPR020568">
    <property type="entry name" value="Ribosomal_Su5_D2-typ_SF"/>
</dbReference>
<dbReference type="InterPro" id="IPR000851">
    <property type="entry name" value="Ribosomal_uS5"/>
</dbReference>
<dbReference type="InterPro" id="IPR005712">
    <property type="entry name" value="Ribosomal_uS5_bac-type"/>
</dbReference>
<dbReference type="InterPro" id="IPR005324">
    <property type="entry name" value="Ribosomal_uS5_C"/>
</dbReference>
<dbReference type="InterPro" id="IPR013810">
    <property type="entry name" value="Ribosomal_uS5_N"/>
</dbReference>
<dbReference type="InterPro" id="IPR018192">
    <property type="entry name" value="Ribosomal_uS5_N_CS"/>
</dbReference>
<dbReference type="InterPro" id="IPR014721">
    <property type="entry name" value="Ribsml_uS5_D2-typ_fold_subgr"/>
</dbReference>
<dbReference type="NCBIfam" id="TIGR01021">
    <property type="entry name" value="rpsE_bact"/>
    <property type="match status" value="1"/>
</dbReference>
<dbReference type="PANTHER" id="PTHR48277">
    <property type="entry name" value="MITOCHONDRIAL RIBOSOMAL PROTEIN S5"/>
    <property type="match status" value="1"/>
</dbReference>
<dbReference type="PANTHER" id="PTHR48277:SF1">
    <property type="entry name" value="MITOCHONDRIAL RIBOSOMAL PROTEIN S5"/>
    <property type="match status" value="1"/>
</dbReference>
<dbReference type="Pfam" id="PF00333">
    <property type="entry name" value="Ribosomal_S5"/>
    <property type="match status" value="1"/>
</dbReference>
<dbReference type="Pfam" id="PF03719">
    <property type="entry name" value="Ribosomal_S5_C"/>
    <property type="match status" value="1"/>
</dbReference>
<dbReference type="SUPFAM" id="SSF54768">
    <property type="entry name" value="dsRNA-binding domain-like"/>
    <property type="match status" value="1"/>
</dbReference>
<dbReference type="SUPFAM" id="SSF54211">
    <property type="entry name" value="Ribosomal protein S5 domain 2-like"/>
    <property type="match status" value="1"/>
</dbReference>
<dbReference type="PROSITE" id="PS00585">
    <property type="entry name" value="RIBOSOMAL_S5"/>
    <property type="match status" value="1"/>
</dbReference>
<dbReference type="PROSITE" id="PS50881">
    <property type="entry name" value="S5_DSRBD"/>
    <property type="match status" value="1"/>
</dbReference>
<name>RS5_HYDCU</name>
<evidence type="ECO:0000255" key="1">
    <source>
        <dbReference type="HAMAP-Rule" id="MF_01307"/>
    </source>
</evidence>
<evidence type="ECO:0000305" key="2"/>
<organism>
    <name type="scientific">Hydrogenovibrio crunogenus (strain DSM 25203 / XCL-2)</name>
    <name type="common">Thiomicrospira crunogena</name>
    <dbReference type="NCBI Taxonomy" id="317025"/>
    <lineage>
        <taxon>Bacteria</taxon>
        <taxon>Pseudomonadati</taxon>
        <taxon>Pseudomonadota</taxon>
        <taxon>Gammaproteobacteria</taxon>
        <taxon>Thiotrichales</taxon>
        <taxon>Piscirickettsiaceae</taxon>
        <taxon>Hydrogenovibrio</taxon>
    </lineage>
</organism>
<sequence>MSSKELQEGQDGLVEKLVSVRRVAKVVKGGRVFGFSALTVVGDGEGRVGYGSGKANEVPVAIKKAMEKARRNMKDVHLDGGTLQYPINFKQGAANIVMLPASDGTGIIAGGAMRAVLEAAGVKDVLAKCVGTTRPVNVVRSTVNALTGMSSPELIAAKRGKSVEEILGE</sequence>
<keyword id="KW-0687">Ribonucleoprotein</keyword>
<keyword id="KW-0689">Ribosomal protein</keyword>
<keyword id="KW-0694">RNA-binding</keyword>
<keyword id="KW-0699">rRNA-binding</keyword>
<comment type="function">
    <text evidence="1">With S4 and S12 plays an important role in translational accuracy.</text>
</comment>
<comment type="function">
    <text evidence="1">Located at the back of the 30S subunit body where it stabilizes the conformation of the head with respect to the body.</text>
</comment>
<comment type="subunit">
    <text evidence="1">Part of the 30S ribosomal subunit. Contacts proteins S4 and S8.</text>
</comment>
<comment type="domain">
    <text>The N-terminal domain interacts with the head of the 30S subunit; the C-terminal domain interacts with the body and contacts protein S4. The interaction surface between S4 and S5 is involved in control of translational fidelity.</text>
</comment>
<comment type="similarity">
    <text evidence="1">Belongs to the universal ribosomal protein uS5 family.</text>
</comment>
<gene>
    <name evidence="1" type="primary">rpsE</name>
    <name type="ordered locus">Tcr_0312</name>
</gene>
<protein>
    <recommendedName>
        <fullName evidence="1">Small ribosomal subunit protein uS5</fullName>
    </recommendedName>
    <alternativeName>
        <fullName evidence="2">30S ribosomal protein S5</fullName>
    </alternativeName>
</protein>
<reference key="1">
    <citation type="journal article" date="2006" name="PLoS Biol.">
        <title>The genome of deep-sea vent chemolithoautotroph Thiomicrospira crunogena XCL-2.</title>
        <authorList>
            <person name="Scott K.M."/>
            <person name="Sievert S.M."/>
            <person name="Abril F.N."/>
            <person name="Ball L.A."/>
            <person name="Barrett C.J."/>
            <person name="Blake R.A."/>
            <person name="Boller A.J."/>
            <person name="Chain P.S.G."/>
            <person name="Clark J.A."/>
            <person name="Davis C.R."/>
            <person name="Detter C."/>
            <person name="Do K.F."/>
            <person name="Dobrinski K.P."/>
            <person name="Faza B.I."/>
            <person name="Fitzpatrick K.A."/>
            <person name="Freyermuth S.K."/>
            <person name="Harmer T.L."/>
            <person name="Hauser L.J."/>
            <person name="Huegler M."/>
            <person name="Kerfeld C.A."/>
            <person name="Klotz M.G."/>
            <person name="Kong W.W."/>
            <person name="Land M."/>
            <person name="Lapidus A."/>
            <person name="Larimer F.W."/>
            <person name="Longo D.L."/>
            <person name="Lucas S."/>
            <person name="Malfatti S.A."/>
            <person name="Massey S.E."/>
            <person name="Martin D.D."/>
            <person name="McCuddin Z."/>
            <person name="Meyer F."/>
            <person name="Moore J.L."/>
            <person name="Ocampo L.H. Jr."/>
            <person name="Paul J.H."/>
            <person name="Paulsen I.T."/>
            <person name="Reep D.K."/>
            <person name="Ren Q."/>
            <person name="Ross R.L."/>
            <person name="Sato P.Y."/>
            <person name="Thomas P."/>
            <person name="Tinkham L.E."/>
            <person name="Zeruth G.T."/>
        </authorList>
    </citation>
    <scope>NUCLEOTIDE SEQUENCE [LARGE SCALE GENOMIC DNA]</scope>
    <source>
        <strain>DSM 25203 / XCL-2</strain>
    </source>
</reference>
<accession>Q31IW5</accession>